<gene>
    <name type="ordered locus">AAR013W</name>
</gene>
<comment type="function">
    <text evidence="1">Required for the assembly of the TOM (translocase of outer membrane) receptor complex, which is responsible for the recognition and translocation of cytosolically synthesized mitochondrial preproteins.</text>
</comment>
<comment type="subcellular location">
    <subcellularLocation>
        <location evidence="1">Mitochondrion outer membrane</location>
    </subcellularLocation>
</comment>
<comment type="similarity">
    <text evidence="2">Belongs to the MIM1 family.</text>
</comment>
<keyword id="KW-0472">Membrane</keyword>
<keyword id="KW-0496">Mitochondrion</keyword>
<keyword id="KW-1000">Mitochondrion outer membrane</keyword>
<keyword id="KW-0653">Protein transport</keyword>
<keyword id="KW-1185">Reference proteome</keyword>
<keyword id="KW-0813">Transport</keyword>
<reference key="1">
    <citation type="journal article" date="2004" name="Science">
        <title>The Ashbya gossypii genome as a tool for mapping the ancient Saccharomyces cerevisiae genome.</title>
        <authorList>
            <person name="Dietrich F.S."/>
            <person name="Voegeli S."/>
            <person name="Brachat S."/>
            <person name="Lerch A."/>
            <person name="Gates K."/>
            <person name="Steiner S."/>
            <person name="Mohr C."/>
            <person name="Poehlmann R."/>
            <person name="Luedi P."/>
            <person name="Choi S."/>
            <person name="Wing R.A."/>
            <person name="Flavier A."/>
            <person name="Gaffney T.D."/>
            <person name="Philippsen P."/>
        </authorList>
    </citation>
    <scope>NUCLEOTIDE SEQUENCE [LARGE SCALE GENOMIC DNA]</scope>
    <source>
        <strain>ATCC 10895 / CBS 109.51 / FGSC 9923 / NRRL Y-1056</strain>
    </source>
</reference>
<reference key="2">
    <citation type="journal article" date="2013" name="G3 (Bethesda)">
        <title>Genomes of Ashbya fungi isolated from insects reveal four mating-type loci, numerous translocations, lack of transposons, and distinct gene duplications.</title>
        <authorList>
            <person name="Dietrich F.S."/>
            <person name="Voegeli S."/>
            <person name="Kuo S."/>
            <person name="Philippsen P."/>
        </authorList>
    </citation>
    <scope>GENOME REANNOTATION</scope>
    <source>
        <strain>ATCC 10895 / CBS 109.51 / FGSC 9923 / NRRL Y-1056</strain>
    </source>
</reference>
<protein>
    <recommendedName>
        <fullName>Mitochondrial import protein 1</fullName>
    </recommendedName>
</protein>
<sequence length="155" mass="16708">MAEEILGNIAEEAHAALLASAGDEATKKSGAIRLPIEDSLDGDFGSRGTAYTDLSTTTSAGTSGQLVERTGGISFGRLLSVAGSCSINLLLPFLNGLMLGFGELLAHELSWKFSWFDKERNRGYRIYPEVRKAAELQERERQRALSRAAGPDGFL</sequence>
<feature type="chain" id="PRO_0000218764" description="Mitochondrial import protein 1">
    <location>
        <begin position="1"/>
        <end position="155"/>
    </location>
</feature>
<accession>P62512</accession>
<accession>Q75ER6</accession>
<organism>
    <name type="scientific">Eremothecium gossypii (strain ATCC 10895 / CBS 109.51 / FGSC 9923 / NRRL Y-1056)</name>
    <name type="common">Yeast</name>
    <name type="synonym">Ashbya gossypii</name>
    <dbReference type="NCBI Taxonomy" id="284811"/>
    <lineage>
        <taxon>Eukaryota</taxon>
        <taxon>Fungi</taxon>
        <taxon>Dikarya</taxon>
        <taxon>Ascomycota</taxon>
        <taxon>Saccharomycotina</taxon>
        <taxon>Saccharomycetes</taxon>
        <taxon>Saccharomycetales</taxon>
        <taxon>Saccharomycetaceae</taxon>
        <taxon>Eremothecium</taxon>
    </lineage>
</organism>
<evidence type="ECO:0000250" key="1"/>
<evidence type="ECO:0000305" key="2"/>
<dbReference type="EMBL" id="AE016814">
    <property type="protein sequence ID" value="AAS50378.2"/>
    <property type="molecule type" value="Genomic_DNA"/>
</dbReference>
<dbReference type="RefSeq" id="NP_982554.2">
    <property type="nucleotide sequence ID" value="NM_207907.2"/>
</dbReference>
<dbReference type="STRING" id="284811.P62512"/>
<dbReference type="EnsemblFungi" id="AAS50378">
    <property type="protein sequence ID" value="AAS50378"/>
    <property type="gene ID" value="AGOS_AAR013W"/>
</dbReference>
<dbReference type="GeneID" id="4618805"/>
<dbReference type="KEGG" id="ago:AGOS_AAR013W"/>
<dbReference type="eggNOG" id="ENOG502SBHA">
    <property type="taxonomic scope" value="Eukaryota"/>
</dbReference>
<dbReference type="HOGENOM" id="CLU_1660752_0_0_1"/>
<dbReference type="InParanoid" id="P62512"/>
<dbReference type="OMA" id="YDITETH"/>
<dbReference type="OrthoDB" id="5529571at2759"/>
<dbReference type="Proteomes" id="UP000000591">
    <property type="component" value="Chromosome I"/>
</dbReference>
<dbReference type="GO" id="GO:0005741">
    <property type="term" value="C:mitochondrial outer membrane"/>
    <property type="evidence" value="ECO:0000318"/>
    <property type="project" value="GO_Central"/>
</dbReference>
<dbReference type="GO" id="GO:0070096">
    <property type="term" value="P:mitochondrial outer membrane translocase complex assembly"/>
    <property type="evidence" value="ECO:0000318"/>
    <property type="project" value="GO_Central"/>
</dbReference>
<dbReference type="GO" id="GO:0045040">
    <property type="term" value="P:protein insertion into mitochondrial outer membrane"/>
    <property type="evidence" value="ECO:0000318"/>
    <property type="project" value="GO_Central"/>
</dbReference>
<dbReference type="InterPro" id="IPR013262">
    <property type="entry name" value="OMP_MIM1/TOM13_mt"/>
</dbReference>
<dbReference type="PANTHER" id="PTHR28241">
    <property type="entry name" value="MITOCHONDRIAL IMPORT PROTEIN 1"/>
    <property type="match status" value="1"/>
</dbReference>
<dbReference type="PANTHER" id="PTHR28241:SF1">
    <property type="entry name" value="MITOCHONDRIAL IMPORT PROTEIN 1"/>
    <property type="match status" value="1"/>
</dbReference>
<dbReference type="Pfam" id="PF08219">
    <property type="entry name" value="TOM13"/>
    <property type="match status" value="1"/>
</dbReference>
<proteinExistence type="inferred from homology"/>
<name>MIM1_EREGS</name>